<feature type="chain" id="PRO_1000129163" description="Succinate--CoA ligase [ADP-forming] subunit beta">
    <location>
        <begin position="1"/>
        <end position="386"/>
    </location>
</feature>
<feature type="domain" description="ATP-grasp" evidence="1">
    <location>
        <begin position="9"/>
        <end position="244"/>
    </location>
</feature>
<feature type="binding site" evidence="1">
    <location>
        <position position="46"/>
    </location>
    <ligand>
        <name>ATP</name>
        <dbReference type="ChEBI" id="CHEBI:30616"/>
    </ligand>
</feature>
<feature type="binding site" evidence="1">
    <location>
        <begin position="53"/>
        <end position="55"/>
    </location>
    <ligand>
        <name>ATP</name>
        <dbReference type="ChEBI" id="CHEBI:30616"/>
    </ligand>
</feature>
<feature type="binding site" evidence="1">
    <location>
        <position position="99"/>
    </location>
    <ligand>
        <name>ATP</name>
        <dbReference type="ChEBI" id="CHEBI:30616"/>
    </ligand>
</feature>
<feature type="binding site" evidence="1">
    <location>
        <position position="102"/>
    </location>
    <ligand>
        <name>ATP</name>
        <dbReference type="ChEBI" id="CHEBI:30616"/>
    </ligand>
</feature>
<feature type="binding site" evidence="1">
    <location>
        <position position="107"/>
    </location>
    <ligand>
        <name>ATP</name>
        <dbReference type="ChEBI" id="CHEBI:30616"/>
    </ligand>
</feature>
<feature type="binding site" evidence="1">
    <location>
        <position position="199"/>
    </location>
    <ligand>
        <name>Mg(2+)</name>
        <dbReference type="ChEBI" id="CHEBI:18420"/>
    </ligand>
</feature>
<feature type="binding site" evidence="1">
    <location>
        <position position="213"/>
    </location>
    <ligand>
        <name>Mg(2+)</name>
        <dbReference type="ChEBI" id="CHEBI:18420"/>
    </ligand>
</feature>
<feature type="binding site" evidence="1">
    <location>
        <position position="264"/>
    </location>
    <ligand>
        <name>substrate</name>
        <note>ligand shared with subunit alpha</note>
    </ligand>
</feature>
<feature type="binding site" evidence="1">
    <location>
        <begin position="321"/>
        <end position="323"/>
    </location>
    <ligand>
        <name>substrate</name>
        <note>ligand shared with subunit alpha</note>
    </ligand>
</feature>
<dbReference type="EC" id="6.2.1.5" evidence="1"/>
<dbReference type="EMBL" id="AM902716">
    <property type="protein sequence ID" value="CAP42401.1"/>
    <property type="molecule type" value="Genomic_DNA"/>
</dbReference>
<dbReference type="SMR" id="A9IKE3"/>
<dbReference type="STRING" id="94624.Bpet2061"/>
<dbReference type="KEGG" id="bpt:Bpet2061"/>
<dbReference type="eggNOG" id="COG0045">
    <property type="taxonomic scope" value="Bacteria"/>
</dbReference>
<dbReference type="UniPathway" id="UPA00223">
    <property type="reaction ID" value="UER00999"/>
</dbReference>
<dbReference type="Proteomes" id="UP000001225">
    <property type="component" value="Chromosome"/>
</dbReference>
<dbReference type="GO" id="GO:0005829">
    <property type="term" value="C:cytosol"/>
    <property type="evidence" value="ECO:0007669"/>
    <property type="project" value="TreeGrafter"/>
</dbReference>
<dbReference type="GO" id="GO:0042709">
    <property type="term" value="C:succinate-CoA ligase complex"/>
    <property type="evidence" value="ECO:0007669"/>
    <property type="project" value="TreeGrafter"/>
</dbReference>
<dbReference type="GO" id="GO:0005524">
    <property type="term" value="F:ATP binding"/>
    <property type="evidence" value="ECO:0007669"/>
    <property type="project" value="UniProtKB-UniRule"/>
</dbReference>
<dbReference type="GO" id="GO:0000287">
    <property type="term" value="F:magnesium ion binding"/>
    <property type="evidence" value="ECO:0007669"/>
    <property type="project" value="UniProtKB-UniRule"/>
</dbReference>
<dbReference type="GO" id="GO:0004775">
    <property type="term" value="F:succinate-CoA ligase (ADP-forming) activity"/>
    <property type="evidence" value="ECO:0007669"/>
    <property type="project" value="UniProtKB-UniRule"/>
</dbReference>
<dbReference type="GO" id="GO:0004776">
    <property type="term" value="F:succinate-CoA ligase (GDP-forming) activity"/>
    <property type="evidence" value="ECO:0007669"/>
    <property type="project" value="RHEA"/>
</dbReference>
<dbReference type="GO" id="GO:0006104">
    <property type="term" value="P:succinyl-CoA metabolic process"/>
    <property type="evidence" value="ECO:0007669"/>
    <property type="project" value="TreeGrafter"/>
</dbReference>
<dbReference type="GO" id="GO:0006099">
    <property type="term" value="P:tricarboxylic acid cycle"/>
    <property type="evidence" value="ECO:0007669"/>
    <property type="project" value="UniProtKB-UniRule"/>
</dbReference>
<dbReference type="FunFam" id="3.30.1490.20:FF:000002">
    <property type="entry name" value="Succinate--CoA ligase [ADP-forming] subunit beta"/>
    <property type="match status" value="1"/>
</dbReference>
<dbReference type="FunFam" id="3.30.470.20:FF:000002">
    <property type="entry name" value="Succinate--CoA ligase [ADP-forming] subunit beta"/>
    <property type="match status" value="1"/>
</dbReference>
<dbReference type="FunFam" id="3.40.50.261:FF:000001">
    <property type="entry name" value="Succinate--CoA ligase [ADP-forming] subunit beta"/>
    <property type="match status" value="1"/>
</dbReference>
<dbReference type="Gene3D" id="3.30.1490.20">
    <property type="entry name" value="ATP-grasp fold, A domain"/>
    <property type="match status" value="1"/>
</dbReference>
<dbReference type="Gene3D" id="3.30.470.20">
    <property type="entry name" value="ATP-grasp fold, B domain"/>
    <property type="match status" value="1"/>
</dbReference>
<dbReference type="Gene3D" id="3.40.50.261">
    <property type="entry name" value="Succinyl-CoA synthetase domains"/>
    <property type="match status" value="1"/>
</dbReference>
<dbReference type="HAMAP" id="MF_00558">
    <property type="entry name" value="Succ_CoA_beta"/>
    <property type="match status" value="1"/>
</dbReference>
<dbReference type="InterPro" id="IPR011761">
    <property type="entry name" value="ATP-grasp"/>
</dbReference>
<dbReference type="InterPro" id="IPR013650">
    <property type="entry name" value="ATP-grasp_succ-CoA_synth-type"/>
</dbReference>
<dbReference type="InterPro" id="IPR013815">
    <property type="entry name" value="ATP_grasp_subdomain_1"/>
</dbReference>
<dbReference type="InterPro" id="IPR017866">
    <property type="entry name" value="Succ-CoA_synthase_bsu_CS"/>
</dbReference>
<dbReference type="InterPro" id="IPR005811">
    <property type="entry name" value="SUCC_ACL_C"/>
</dbReference>
<dbReference type="InterPro" id="IPR005809">
    <property type="entry name" value="Succ_CoA_ligase-like_bsu"/>
</dbReference>
<dbReference type="InterPro" id="IPR016102">
    <property type="entry name" value="Succinyl-CoA_synth-like"/>
</dbReference>
<dbReference type="NCBIfam" id="NF001913">
    <property type="entry name" value="PRK00696.1"/>
    <property type="match status" value="1"/>
</dbReference>
<dbReference type="NCBIfam" id="TIGR01016">
    <property type="entry name" value="sucCoAbeta"/>
    <property type="match status" value="1"/>
</dbReference>
<dbReference type="PANTHER" id="PTHR11815:SF10">
    <property type="entry name" value="SUCCINATE--COA LIGASE [GDP-FORMING] SUBUNIT BETA, MITOCHONDRIAL"/>
    <property type="match status" value="1"/>
</dbReference>
<dbReference type="PANTHER" id="PTHR11815">
    <property type="entry name" value="SUCCINYL-COA SYNTHETASE BETA CHAIN"/>
    <property type="match status" value="1"/>
</dbReference>
<dbReference type="Pfam" id="PF08442">
    <property type="entry name" value="ATP-grasp_2"/>
    <property type="match status" value="1"/>
</dbReference>
<dbReference type="Pfam" id="PF00549">
    <property type="entry name" value="Ligase_CoA"/>
    <property type="match status" value="1"/>
</dbReference>
<dbReference type="PIRSF" id="PIRSF001554">
    <property type="entry name" value="SucCS_beta"/>
    <property type="match status" value="1"/>
</dbReference>
<dbReference type="SUPFAM" id="SSF56059">
    <property type="entry name" value="Glutathione synthetase ATP-binding domain-like"/>
    <property type="match status" value="1"/>
</dbReference>
<dbReference type="SUPFAM" id="SSF52210">
    <property type="entry name" value="Succinyl-CoA synthetase domains"/>
    <property type="match status" value="1"/>
</dbReference>
<dbReference type="PROSITE" id="PS50975">
    <property type="entry name" value="ATP_GRASP"/>
    <property type="match status" value="1"/>
</dbReference>
<dbReference type="PROSITE" id="PS01217">
    <property type="entry name" value="SUCCINYL_COA_LIG_3"/>
    <property type="match status" value="1"/>
</dbReference>
<keyword id="KW-0067">ATP-binding</keyword>
<keyword id="KW-0436">Ligase</keyword>
<keyword id="KW-0460">Magnesium</keyword>
<keyword id="KW-0479">Metal-binding</keyword>
<keyword id="KW-0547">Nucleotide-binding</keyword>
<keyword id="KW-0816">Tricarboxylic acid cycle</keyword>
<organism>
    <name type="scientific">Bordetella petrii (strain ATCC BAA-461 / DSM 12804 / CCUG 43448)</name>
    <dbReference type="NCBI Taxonomy" id="340100"/>
    <lineage>
        <taxon>Bacteria</taxon>
        <taxon>Pseudomonadati</taxon>
        <taxon>Pseudomonadota</taxon>
        <taxon>Betaproteobacteria</taxon>
        <taxon>Burkholderiales</taxon>
        <taxon>Alcaligenaceae</taxon>
        <taxon>Bordetella</taxon>
    </lineage>
</organism>
<evidence type="ECO:0000255" key="1">
    <source>
        <dbReference type="HAMAP-Rule" id="MF_00558"/>
    </source>
</evidence>
<reference key="1">
    <citation type="journal article" date="2008" name="BMC Genomics">
        <title>The missing link: Bordetella petrii is endowed with both the metabolic versatility of environmental bacteria and virulence traits of pathogenic Bordetellae.</title>
        <authorList>
            <person name="Gross R."/>
            <person name="Guzman C.A."/>
            <person name="Sebaihia M."/>
            <person name="Martin dos Santos V.A.P."/>
            <person name="Pieper D.H."/>
            <person name="Koebnik R."/>
            <person name="Lechner M."/>
            <person name="Bartels D."/>
            <person name="Buhrmester J."/>
            <person name="Choudhuri J.V."/>
            <person name="Ebensen T."/>
            <person name="Gaigalat L."/>
            <person name="Herrmann S."/>
            <person name="Khachane A.N."/>
            <person name="Larisch C."/>
            <person name="Link S."/>
            <person name="Linke B."/>
            <person name="Meyer F."/>
            <person name="Mormann S."/>
            <person name="Nakunst D."/>
            <person name="Rueckert C."/>
            <person name="Schneiker-Bekel S."/>
            <person name="Schulze K."/>
            <person name="Voerholter F.-J."/>
            <person name="Yevsa T."/>
            <person name="Engle J.T."/>
            <person name="Goldman W.E."/>
            <person name="Puehler A."/>
            <person name="Goebel U.B."/>
            <person name="Goesmann A."/>
            <person name="Bloecker H."/>
            <person name="Kaiser O."/>
            <person name="Martinez-Arias R."/>
        </authorList>
    </citation>
    <scope>NUCLEOTIDE SEQUENCE [LARGE SCALE GENOMIC DNA]</scope>
    <source>
        <strain>ATCC BAA-461 / DSM 12804 / CCUG 43448</strain>
    </source>
</reference>
<comment type="function">
    <text evidence="1">Succinyl-CoA synthetase functions in the citric acid cycle (TCA), coupling the hydrolysis of succinyl-CoA to the synthesis of either ATP or GTP and thus represents the only step of substrate-level phosphorylation in the TCA. The beta subunit provides nucleotide specificity of the enzyme and binds the substrate succinate, while the binding sites for coenzyme A and phosphate are found in the alpha subunit.</text>
</comment>
<comment type="catalytic activity">
    <reaction evidence="1">
        <text>succinate + ATP + CoA = succinyl-CoA + ADP + phosphate</text>
        <dbReference type="Rhea" id="RHEA:17661"/>
        <dbReference type="ChEBI" id="CHEBI:30031"/>
        <dbReference type="ChEBI" id="CHEBI:30616"/>
        <dbReference type="ChEBI" id="CHEBI:43474"/>
        <dbReference type="ChEBI" id="CHEBI:57287"/>
        <dbReference type="ChEBI" id="CHEBI:57292"/>
        <dbReference type="ChEBI" id="CHEBI:456216"/>
        <dbReference type="EC" id="6.2.1.5"/>
    </reaction>
    <physiologicalReaction direction="right-to-left" evidence="1">
        <dbReference type="Rhea" id="RHEA:17663"/>
    </physiologicalReaction>
</comment>
<comment type="catalytic activity">
    <reaction evidence="1">
        <text>GTP + succinate + CoA = succinyl-CoA + GDP + phosphate</text>
        <dbReference type="Rhea" id="RHEA:22120"/>
        <dbReference type="ChEBI" id="CHEBI:30031"/>
        <dbReference type="ChEBI" id="CHEBI:37565"/>
        <dbReference type="ChEBI" id="CHEBI:43474"/>
        <dbReference type="ChEBI" id="CHEBI:57287"/>
        <dbReference type="ChEBI" id="CHEBI:57292"/>
        <dbReference type="ChEBI" id="CHEBI:58189"/>
    </reaction>
    <physiologicalReaction direction="right-to-left" evidence="1">
        <dbReference type="Rhea" id="RHEA:22122"/>
    </physiologicalReaction>
</comment>
<comment type="cofactor">
    <cofactor evidence="1">
        <name>Mg(2+)</name>
        <dbReference type="ChEBI" id="CHEBI:18420"/>
    </cofactor>
    <text evidence="1">Binds 1 Mg(2+) ion per subunit.</text>
</comment>
<comment type="pathway">
    <text evidence="1">Carbohydrate metabolism; tricarboxylic acid cycle; succinate from succinyl-CoA (ligase route): step 1/1.</text>
</comment>
<comment type="subunit">
    <text evidence="1">Heterotetramer of two alpha and two beta subunits.</text>
</comment>
<comment type="similarity">
    <text evidence="1">Belongs to the succinate/malate CoA ligase beta subunit family.</text>
</comment>
<proteinExistence type="inferred from homology"/>
<sequence length="386" mass="41113">MKIHEYQGKELLKQFGVPVPRGIPAFSVDEAVAAAEKLGGPVWVVKAQIHAGGRGKGGGVKLARSLDDVRKLASEILGMQLVTHQTGPEGQKVNRLYIEDGADIQKEYYVSLVTDRATQKVAIIASSEGGMDIEEVAHSTPEKIITEYIDPLTGLQAEQAKKVAESIGLSGGSADQAADVFQKLYTCYMDTDASLVEINPLNCDSKGNIIALDAKFNFDSNALFRHPEIVAYRDLDEEDPAEIEASKFDLAYIQLDGNIGCLVNGAGLAMATMDTIKLFGGEPANFLDVGGGATAEKVTEAFKIMLKNKGVKAILVNIFGGIMRCDVIAEGVITACKAVNLNVPLVVRMKGTNEELGKKMLADSGLPIISADTMAEAATRVVAAVK</sequence>
<gene>
    <name evidence="1" type="primary">sucC</name>
    <name type="ordered locus">Bpet2061</name>
</gene>
<name>SUCC_BORPD</name>
<protein>
    <recommendedName>
        <fullName evidence="1">Succinate--CoA ligase [ADP-forming] subunit beta</fullName>
        <ecNumber evidence="1">6.2.1.5</ecNumber>
    </recommendedName>
    <alternativeName>
        <fullName evidence="1">Succinyl-CoA synthetase subunit beta</fullName>
        <shortName evidence="1">SCS-beta</shortName>
    </alternativeName>
</protein>
<accession>A9IKE3</accession>